<dbReference type="EC" id="6.1.1.12" evidence="1"/>
<dbReference type="EMBL" id="AL591979">
    <property type="protein sequence ID" value="CAC99597.1"/>
    <property type="molecule type" value="Genomic_DNA"/>
</dbReference>
<dbReference type="PIR" id="AG1264">
    <property type="entry name" value="AG1264"/>
</dbReference>
<dbReference type="RefSeq" id="NP_465044.1">
    <property type="nucleotide sequence ID" value="NC_003210.1"/>
</dbReference>
<dbReference type="RefSeq" id="WP_003723523.1">
    <property type="nucleotide sequence ID" value="NZ_CP149495.1"/>
</dbReference>
<dbReference type="SMR" id="Q8Y709"/>
<dbReference type="STRING" id="169963.gene:17594176"/>
<dbReference type="PaxDb" id="169963-lmo1519"/>
<dbReference type="EnsemblBacteria" id="CAC99597">
    <property type="protein sequence ID" value="CAC99597"/>
    <property type="gene ID" value="CAC99597"/>
</dbReference>
<dbReference type="GeneID" id="987778"/>
<dbReference type="KEGG" id="lmo:lmo1519"/>
<dbReference type="PATRIC" id="fig|169963.11.peg.1560"/>
<dbReference type="eggNOG" id="COG0173">
    <property type="taxonomic scope" value="Bacteria"/>
</dbReference>
<dbReference type="HOGENOM" id="CLU_014330_3_2_9"/>
<dbReference type="OrthoDB" id="9802326at2"/>
<dbReference type="PhylomeDB" id="Q8Y709"/>
<dbReference type="BioCyc" id="LMON169963:LMO1519-MONOMER"/>
<dbReference type="Proteomes" id="UP000000817">
    <property type="component" value="Chromosome"/>
</dbReference>
<dbReference type="GO" id="GO:0005737">
    <property type="term" value="C:cytoplasm"/>
    <property type="evidence" value="ECO:0007669"/>
    <property type="project" value="UniProtKB-SubCell"/>
</dbReference>
<dbReference type="GO" id="GO:0004815">
    <property type="term" value="F:aspartate-tRNA ligase activity"/>
    <property type="evidence" value="ECO:0000318"/>
    <property type="project" value="GO_Central"/>
</dbReference>
<dbReference type="GO" id="GO:0005524">
    <property type="term" value="F:ATP binding"/>
    <property type="evidence" value="ECO:0007669"/>
    <property type="project" value="UniProtKB-UniRule"/>
</dbReference>
<dbReference type="GO" id="GO:0140096">
    <property type="term" value="F:catalytic activity, acting on a protein"/>
    <property type="evidence" value="ECO:0007669"/>
    <property type="project" value="UniProtKB-ARBA"/>
</dbReference>
<dbReference type="GO" id="GO:0003676">
    <property type="term" value="F:nucleic acid binding"/>
    <property type="evidence" value="ECO:0007669"/>
    <property type="project" value="InterPro"/>
</dbReference>
<dbReference type="GO" id="GO:0016740">
    <property type="term" value="F:transferase activity"/>
    <property type="evidence" value="ECO:0007669"/>
    <property type="project" value="UniProtKB-ARBA"/>
</dbReference>
<dbReference type="GO" id="GO:0006422">
    <property type="term" value="P:aspartyl-tRNA aminoacylation"/>
    <property type="evidence" value="ECO:0000318"/>
    <property type="project" value="GO_Central"/>
</dbReference>
<dbReference type="CDD" id="cd00777">
    <property type="entry name" value="AspRS_core"/>
    <property type="match status" value="1"/>
</dbReference>
<dbReference type="CDD" id="cd04317">
    <property type="entry name" value="EcAspRS_like_N"/>
    <property type="match status" value="1"/>
</dbReference>
<dbReference type="Gene3D" id="3.30.930.10">
    <property type="entry name" value="Bira Bifunctional Protein, Domain 2"/>
    <property type="match status" value="1"/>
</dbReference>
<dbReference type="Gene3D" id="3.30.1360.30">
    <property type="entry name" value="GAD-like domain"/>
    <property type="match status" value="1"/>
</dbReference>
<dbReference type="Gene3D" id="2.40.50.140">
    <property type="entry name" value="Nucleic acid-binding proteins"/>
    <property type="match status" value="1"/>
</dbReference>
<dbReference type="HAMAP" id="MF_00044">
    <property type="entry name" value="Asp_tRNA_synth_type1"/>
    <property type="match status" value="1"/>
</dbReference>
<dbReference type="InterPro" id="IPR004364">
    <property type="entry name" value="Aa-tRNA-synt_II"/>
</dbReference>
<dbReference type="InterPro" id="IPR006195">
    <property type="entry name" value="aa-tRNA-synth_II"/>
</dbReference>
<dbReference type="InterPro" id="IPR045864">
    <property type="entry name" value="aa-tRNA-synth_II/BPL/LPL"/>
</dbReference>
<dbReference type="InterPro" id="IPR004524">
    <property type="entry name" value="Asp-tRNA-ligase_1"/>
</dbReference>
<dbReference type="InterPro" id="IPR047089">
    <property type="entry name" value="Asp-tRNA-ligase_1_N"/>
</dbReference>
<dbReference type="InterPro" id="IPR002312">
    <property type="entry name" value="Asp/Asn-tRNA-synth_IIb"/>
</dbReference>
<dbReference type="InterPro" id="IPR047090">
    <property type="entry name" value="AspRS_core"/>
</dbReference>
<dbReference type="InterPro" id="IPR004115">
    <property type="entry name" value="GAD-like_sf"/>
</dbReference>
<dbReference type="InterPro" id="IPR029351">
    <property type="entry name" value="GAD_dom"/>
</dbReference>
<dbReference type="InterPro" id="IPR012340">
    <property type="entry name" value="NA-bd_OB-fold"/>
</dbReference>
<dbReference type="InterPro" id="IPR004365">
    <property type="entry name" value="NA-bd_OB_tRNA"/>
</dbReference>
<dbReference type="NCBIfam" id="TIGR00459">
    <property type="entry name" value="aspS_bact"/>
    <property type="match status" value="1"/>
</dbReference>
<dbReference type="NCBIfam" id="NF001750">
    <property type="entry name" value="PRK00476.1"/>
    <property type="match status" value="1"/>
</dbReference>
<dbReference type="PANTHER" id="PTHR22594:SF5">
    <property type="entry name" value="ASPARTATE--TRNA LIGASE, MITOCHONDRIAL"/>
    <property type="match status" value="1"/>
</dbReference>
<dbReference type="PANTHER" id="PTHR22594">
    <property type="entry name" value="ASPARTYL/LYSYL-TRNA SYNTHETASE"/>
    <property type="match status" value="1"/>
</dbReference>
<dbReference type="Pfam" id="PF02938">
    <property type="entry name" value="GAD"/>
    <property type="match status" value="1"/>
</dbReference>
<dbReference type="Pfam" id="PF00152">
    <property type="entry name" value="tRNA-synt_2"/>
    <property type="match status" value="1"/>
</dbReference>
<dbReference type="Pfam" id="PF01336">
    <property type="entry name" value="tRNA_anti-codon"/>
    <property type="match status" value="1"/>
</dbReference>
<dbReference type="PRINTS" id="PR01042">
    <property type="entry name" value="TRNASYNTHASP"/>
</dbReference>
<dbReference type="SUPFAM" id="SSF55681">
    <property type="entry name" value="Class II aaRS and biotin synthetases"/>
    <property type="match status" value="1"/>
</dbReference>
<dbReference type="SUPFAM" id="SSF55261">
    <property type="entry name" value="GAD domain-like"/>
    <property type="match status" value="1"/>
</dbReference>
<dbReference type="SUPFAM" id="SSF50249">
    <property type="entry name" value="Nucleic acid-binding proteins"/>
    <property type="match status" value="1"/>
</dbReference>
<dbReference type="PROSITE" id="PS50862">
    <property type="entry name" value="AA_TRNA_LIGASE_II"/>
    <property type="match status" value="1"/>
</dbReference>
<name>SYD_LISMO</name>
<sequence>MEKRTSYCGELNEAHIGQSVVLHGWVQKRRDLGGLIFIDLRDREGIVQVVFNPEFSKEALEIADSVRNEFVVTIKGTVHARGEKAINEKLATGKVEVLAEEITILNTSKTPPFYIEDGVNVSDELRLKYRYLDLRRPEMNNIFKMRHTVTRTFRNKLDALGFFDIETPYLTKSTPEGARDYLVPSRVYPGNFYALPQSPQILKQLLMTAGFDKYYQIVRCFRDEDLRGDRQPEFTQIDLETSFLTKEEIQAITEDMLVDVVKEAKNITIEKPFPRMTYKEAMDRFGSDKPDIRFGLELQNVSDVVKDVDFKVFQSAIENGGEVKAINAKAAAANFSRKDLDALGVFVANYGAKGLAWLKVEAGELKGPIAKFFPEDKAAELKVALQAEDGDLLLFAADKADIVAASLGALRNKLGKDLNLINEEELAFLWVTDWPLFEYDEEAERYVSAHHPFTLPKEEDIPLLETDSSKVMAEAYDIVLNGYEIGGGSLRIYKKEVQESMFRALGFTDESAKEQFGFLMDALEYGTPPHGGIALGLDRIVMILAGRNNLRDTIAFPKTGSAVDPLTNAPGEVSEAQLAELKLETVKKETN</sequence>
<evidence type="ECO:0000255" key="1">
    <source>
        <dbReference type="HAMAP-Rule" id="MF_00044"/>
    </source>
</evidence>
<comment type="function">
    <text evidence="1">Catalyzes the attachment of L-aspartate to tRNA(Asp) in a two-step reaction: L-aspartate is first activated by ATP to form Asp-AMP and then transferred to the acceptor end of tRNA(Asp).</text>
</comment>
<comment type="catalytic activity">
    <reaction evidence="1">
        <text>tRNA(Asp) + L-aspartate + ATP = L-aspartyl-tRNA(Asp) + AMP + diphosphate</text>
        <dbReference type="Rhea" id="RHEA:19649"/>
        <dbReference type="Rhea" id="RHEA-COMP:9660"/>
        <dbReference type="Rhea" id="RHEA-COMP:9678"/>
        <dbReference type="ChEBI" id="CHEBI:29991"/>
        <dbReference type="ChEBI" id="CHEBI:30616"/>
        <dbReference type="ChEBI" id="CHEBI:33019"/>
        <dbReference type="ChEBI" id="CHEBI:78442"/>
        <dbReference type="ChEBI" id="CHEBI:78516"/>
        <dbReference type="ChEBI" id="CHEBI:456215"/>
        <dbReference type="EC" id="6.1.1.12"/>
    </reaction>
</comment>
<comment type="subunit">
    <text evidence="1">Homodimer.</text>
</comment>
<comment type="subcellular location">
    <subcellularLocation>
        <location evidence="1">Cytoplasm</location>
    </subcellularLocation>
</comment>
<comment type="similarity">
    <text evidence="1">Belongs to the class-II aminoacyl-tRNA synthetase family. Type 1 subfamily.</text>
</comment>
<accession>Q8Y709</accession>
<organism>
    <name type="scientific">Listeria monocytogenes serovar 1/2a (strain ATCC BAA-679 / EGD-e)</name>
    <dbReference type="NCBI Taxonomy" id="169963"/>
    <lineage>
        <taxon>Bacteria</taxon>
        <taxon>Bacillati</taxon>
        <taxon>Bacillota</taxon>
        <taxon>Bacilli</taxon>
        <taxon>Bacillales</taxon>
        <taxon>Listeriaceae</taxon>
        <taxon>Listeria</taxon>
    </lineage>
</organism>
<gene>
    <name evidence="1" type="primary">aspS</name>
    <name type="ordered locus">lmo1519</name>
</gene>
<feature type="chain" id="PRO_0000110896" description="Aspartate--tRNA ligase">
    <location>
        <begin position="1"/>
        <end position="591"/>
    </location>
</feature>
<feature type="region of interest" description="Aspartate" evidence="1">
    <location>
        <begin position="200"/>
        <end position="203"/>
    </location>
</feature>
<feature type="binding site" evidence="1">
    <location>
        <position position="176"/>
    </location>
    <ligand>
        <name>L-aspartate</name>
        <dbReference type="ChEBI" id="CHEBI:29991"/>
    </ligand>
</feature>
<feature type="binding site" evidence="1">
    <location>
        <begin position="222"/>
        <end position="224"/>
    </location>
    <ligand>
        <name>ATP</name>
        <dbReference type="ChEBI" id="CHEBI:30616"/>
    </ligand>
</feature>
<feature type="binding site" evidence="1">
    <location>
        <position position="222"/>
    </location>
    <ligand>
        <name>L-aspartate</name>
        <dbReference type="ChEBI" id="CHEBI:29991"/>
    </ligand>
</feature>
<feature type="binding site" evidence="1">
    <location>
        <position position="231"/>
    </location>
    <ligand>
        <name>ATP</name>
        <dbReference type="ChEBI" id="CHEBI:30616"/>
    </ligand>
</feature>
<feature type="binding site" evidence="1">
    <location>
        <position position="450"/>
    </location>
    <ligand>
        <name>L-aspartate</name>
        <dbReference type="ChEBI" id="CHEBI:29991"/>
    </ligand>
</feature>
<feature type="binding site" evidence="1">
    <location>
        <position position="484"/>
    </location>
    <ligand>
        <name>ATP</name>
        <dbReference type="ChEBI" id="CHEBI:30616"/>
    </ligand>
</feature>
<feature type="binding site" evidence="1">
    <location>
        <position position="491"/>
    </location>
    <ligand>
        <name>L-aspartate</name>
        <dbReference type="ChEBI" id="CHEBI:29991"/>
    </ligand>
</feature>
<feature type="binding site" evidence="1">
    <location>
        <begin position="536"/>
        <end position="539"/>
    </location>
    <ligand>
        <name>ATP</name>
        <dbReference type="ChEBI" id="CHEBI:30616"/>
    </ligand>
</feature>
<protein>
    <recommendedName>
        <fullName evidence="1">Aspartate--tRNA ligase</fullName>
        <ecNumber evidence="1">6.1.1.12</ecNumber>
    </recommendedName>
    <alternativeName>
        <fullName evidence="1">Aspartyl-tRNA synthetase</fullName>
        <shortName evidence="1">AspRS</shortName>
    </alternativeName>
</protein>
<reference key="1">
    <citation type="journal article" date="2001" name="Science">
        <title>Comparative genomics of Listeria species.</title>
        <authorList>
            <person name="Glaser P."/>
            <person name="Frangeul L."/>
            <person name="Buchrieser C."/>
            <person name="Rusniok C."/>
            <person name="Amend A."/>
            <person name="Baquero F."/>
            <person name="Berche P."/>
            <person name="Bloecker H."/>
            <person name="Brandt P."/>
            <person name="Chakraborty T."/>
            <person name="Charbit A."/>
            <person name="Chetouani F."/>
            <person name="Couve E."/>
            <person name="de Daruvar A."/>
            <person name="Dehoux P."/>
            <person name="Domann E."/>
            <person name="Dominguez-Bernal G."/>
            <person name="Duchaud E."/>
            <person name="Durant L."/>
            <person name="Dussurget O."/>
            <person name="Entian K.-D."/>
            <person name="Fsihi H."/>
            <person name="Garcia-del Portillo F."/>
            <person name="Garrido P."/>
            <person name="Gautier L."/>
            <person name="Goebel W."/>
            <person name="Gomez-Lopez N."/>
            <person name="Hain T."/>
            <person name="Hauf J."/>
            <person name="Jackson D."/>
            <person name="Jones L.-M."/>
            <person name="Kaerst U."/>
            <person name="Kreft J."/>
            <person name="Kuhn M."/>
            <person name="Kunst F."/>
            <person name="Kurapkat G."/>
            <person name="Madueno E."/>
            <person name="Maitournam A."/>
            <person name="Mata Vicente J."/>
            <person name="Ng E."/>
            <person name="Nedjari H."/>
            <person name="Nordsiek G."/>
            <person name="Novella S."/>
            <person name="de Pablos B."/>
            <person name="Perez-Diaz J.-C."/>
            <person name="Purcell R."/>
            <person name="Remmel B."/>
            <person name="Rose M."/>
            <person name="Schlueter T."/>
            <person name="Simoes N."/>
            <person name="Tierrez A."/>
            <person name="Vazquez-Boland J.-A."/>
            <person name="Voss H."/>
            <person name="Wehland J."/>
            <person name="Cossart P."/>
        </authorList>
    </citation>
    <scope>NUCLEOTIDE SEQUENCE [LARGE SCALE GENOMIC DNA]</scope>
    <source>
        <strain>ATCC BAA-679 / EGD-e</strain>
    </source>
</reference>
<proteinExistence type="inferred from homology"/>
<keyword id="KW-0030">Aminoacyl-tRNA synthetase</keyword>
<keyword id="KW-0067">ATP-binding</keyword>
<keyword id="KW-0963">Cytoplasm</keyword>
<keyword id="KW-0436">Ligase</keyword>
<keyword id="KW-0547">Nucleotide-binding</keyword>
<keyword id="KW-0648">Protein biosynthesis</keyword>
<keyword id="KW-1185">Reference proteome</keyword>